<dbReference type="EMBL" id="AY522329">
    <property type="status" value="NOT_ANNOTATED_CDS"/>
    <property type="molecule type" value="Genomic_DNA"/>
</dbReference>
<dbReference type="RefSeq" id="YP_009161351.1">
    <property type="nucleotide sequence ID" value="NC_027678.1"/>
</dbReference>
<dbReference type="SMR" id="P0C430"/>
<dbReference type="STRING" id="39946.P0C430"/>
<dbReference type="Proteomes" id="UP000007015">
    <property type="component" value="Chloroplast"/>
</dbReference>
<dbReference type="GO" id="GO:0009535">
    <property type="term" value="C:chloroplast thylakoid membrane"/>
    <property type="evidence" value="ECO:0007669"/>
    <property type="project" value="UniProtKB-SubCell"/>
</dbReference>
<dbReference type="GO" id="GO:0009539">
    <property type="term" value="C:photosystem II reaction center"/>
    <property type="evidence" value="ECO:0007669"/>
    <property type="project" value="InterPro"/>
</dbReference>
<dbReference type="GO" id="GO:0009536">
    <property type="term" value="C:plastid"/>
    <property type="evidence" value="ECO:0000305"/>
    <property type="project" value="Gramene"/>
</dbReference>
<dbReference type="GO" id="GO:0015979">
    <property type="term" value="P:photosynthesis"/>
    <property type="evidence" value="ECO:0007669"/>
    <property type="project" value="UniProtKB-UniRule"/>
</dbReference>
<dbReference type="GO" id="GO:0042549">
    <property type="term" value="P:photosystem II stabilization"/>
    <property type="evidence" value="ECO:0007669"/>
    <property type="project" value="InterPro"/>
</dbReference>
<dbReference type="FunFam" id="1.10.287.740:FF:000001">
    <property type="entry name" value="Photosystem II reaction center protein Z"/>
    <property type="match status" value="1"/>
</dbReference>
<dbReference type="Gene3D" id="1.10.287.740">
    <property type="entry name" value="Photosystem II PsbZ, reaction centre"/>
    <property type="match status" value="1"/>
</dbReference>
<dbReference type="HAMAP" id="MF_00644">
    <property type="entry name" value="PSII_PsbZ"/>
    <property type="match status" value="1"/>
</dbReference>
<dbReference type="InterPro" id="IPR002644">
    <property type="entry name" value="PSII_PsbZ"/>
</dbReference>
<dbReference type="InterPro" id="IPR036512">
    <property type="entry name" value="PSII_PsbZ_sf"/>
</dbReference>
<dbReference type="NCBIfam" id="TIGR03043">
    <property type="entry name" value="PS_II_psbZ"/>
    <property type="match status" value="1"/>
</dbReference>
<dbReference type="PANTHER" id="PTHR34971">
    <property type="entry name" value="PHOTOSYSTEM II REACTION CENTER PROTEIN Z"/>
    <property type="match status" value="1"/>
</dbReference>
<dbReference type="PANTHER" id="PTHR34971:SF2">
    <property type="entry name" value="PHOTOSYSTEM II REACTION CENTER PROTEIN Z"/>
    <property type="match status" value="1"/>
</dbReference>
<dbReference type="Pfam" id="PF01737">
    <property type="entry name" value="Ycf9"/>
    <property type="match status" value="1"/>
</dbReference>
<dbReference type="SUPFAM" id="SSF161055">
    <property type="entry name" value="PsbZ-like"/>
    <property type="match status" value="1"/>
</dbReference>
<evidence type="ECO:0000255" key="1">
    <source>
        <dbReference type="HAMAP-Rule" id="MF_00644"/>
    </source>
</evidence>
<evidence type="ECO:0000305" key="2"/>
<sequence length="62" mass="6582">MTIAFQLAVFALIVTSSVLVISVPLVFASPDGWSNNKNVVFSGTSLWIGLVFLVAILNSLIS</sequence>
<name>PSBZ_ORYSI</name>
<keyword id="KW-0150">Chloroplast</keyword>
<keyword id="KW-0472">Membrane</keyword>
<keyword id="KW-0602">Photosynthesis</keyword>
<keyword id="KW-0604">Photosystem II</keyword>
<keyword id="KW-0934">Plastid</keyword>
<keyword id="KW-0674">Reaction center</keyword>
<keyword id="KW-1185">Reference proteome</keyword>
<keyword id="KW-0793">Thylakoid</keyword>
<keyword id="KW-0812">Transmembrane</keyword>
<keyword id="KW-1133">Transmembrane helix</keyword>
<gene>
    <name evidence="1" type="primary">psbZ</name>
</gene>
<protein>
    <recommendedName>
        <fullName evidence="1">Photosystem II reaction center protein Z</fullName>
        <shortName evidence="1">PSII-Z</shortName>
    </recommendedName>
</protein>
<organism>
    <name type="scientific">Oryza sativa subsp. indica</name>
    <name type="common">Rice</name>
    <dbReference type="NCBI Taxonomy" id="39946"/>
    <lineage>
        <taxon>Eukaryota</taxon>
        <taxon>Viridiplantae</taxon>
        <taxon>Streptophyta</taxon>
        <taxon>Embryophyta</taxon>
        <taxon>Tracheophyta</taxon>
        <taxon>Spermatophyta</taxon>
        <taxon>Magnoliopsida</taxon>
        <taxon>Liliopsida</taxon>
        <taxon>Poales</taxon>
        <taxon>Poaceae</taxon>
        <taxon>BOP clade</taxon>
        <taxon>Oryzoideae</taxon>
        <taxon>Oryzeae</taxon>
        <taxon>Oryzinae</taxon>
        <taxon>Oryza</taxon>
        <taxon>Oryza sativa</taxon>
    </lineage>
</organism>
<geneLocation type="chloroplast"/>
<comment type="function">
    <text evidence="1">May control the interaction of photosystem II (PSII) cores with the light-harvesting antenna, regulates electron flow through the 2 photosystem reaction centers. PSII is a light-driven water plastoquinone oxidoreductase, using light energy to abstract electrons from H(2)O, generating a proton gradient subsequently used for ATP formation.</text>
</comment>
<comment type="subunit">
    <text evidence="1">PSII is composed of 1 copy each of membrane proteins PsbA, PsbB, PsbC, PsbD, PsbE, PsbF, PsbH, PsbI, PsbJ, PsbK, PsbL, PsbM, PsbT, PsbY, PsbZ, Psb30/Ycf12, at least 3 peripheral proteins of the oxygen-evolving complex and a large number of cofactors. It forms dimeric complexes.</text>
</comment>
<comment type="subcellular location">
    <subcellularLocation>
        <location evidence="1">Plastid</location>
        <location evidence="1">Chloroplast thylakoid membrane</location>
        <topology evidence="1">Multi-pass membrane protein</topology>
    </subcellularLocation>
</comment>
<comment type="similarity">
    <text evidence="1 2">Belongs to the PsbZ family.</text>
</comment>
<feature type="chain" id="PRO_0000289941" description="Photosystem II reaction center protein Z">
    <location>
        <begin position="1"/>
        <end position="62"/>
    </location>
</feature>
<feature type="transmembrane region" description="Helical" evidence="1">
    <location>
        <begin position="8"/>
        <end position="28"/>
    </location>
</feature>
<feature type="transmembrane region" description="Helical" evidence="1">
    <location>
        <begin position="41"/>
        <end position="61"/>
    </location>
</feature>
<accession>P0C430</accession>
<proteinExistence type="inferred from homology"/>
<reference key="1">
    <citation type="journal article" date="2004" name="Plant Physiol.">
        <title>A comparison of rice chloroplast genomes.</title>
        <authorList>
            <person name="Tang J."/>
            <person name="Xia H."/>
            <person name="Cao M."/>
            <person name="Zhang X."/>
            <person name="Zeng W."/>
            <person name="Hu S."/>
            <person name="Tong W."/>
            <person name="Wang J."/>
            <person name="Wang J."/>
            <person name="Yu J."/>
            <person name="Yang H."/>
            <person name="Zhu L."/>
        </authorList>
    </citation>
    <scope>NUCLEOTIDE SEQUENCE [LARGE SCALE GENOMIC DNA]</scope>
    <source>
        <strain>cv. 93-11</strain>
    </source>
</reference>